<organism>
    <name type="scientific">Buchnera aphidicola subsp. Acyrthosiphon pisum (strain Tuc7)</name>
    <dbReference type="NCBI Taxonomy" id="561501"/>
    <lineage>
        <taxon>Bacteria</taxon>
        <taxon>Pseudomonadati</taxon>
        <taxon>Pseudomonadota</taxon>
        <taxon>Gammaproteobacteria</taxon>
        <taxon>Enterobacterales</taxon>
        <taxon>Erwiniaceae</taxon>
        <taxon>Buchnera</taxon>
    </lineage>
</organism>
<reference key="1">
    <citation type="journal article" date="2009" name="Science">
        <title>The dynamics and time scale of ongoing genomic erosion in symbiotic bacteria.</title>
        <authorList>
            <person name="Moran N.A."/>
            <person name="McLaughlin H.J."/>
            <person name="Sorek R."/>
        </authorList>
    </citation>
    <scope>NUCLEOTIDE SEQUENCE [LARGE SCALE GENOMIC DNA]</scope>
    <source>
        <strain>Tuc7</strain>
    </source>
</reference>
<gene>
    <name evidence="1" type="primary">aroE</name>
    <name type="ordered locus">BUAPTUC7_487</name>
</gene>
<dbReference type="EC" id="1.1.1.25" evidence="1"/>
<dbReference type="EMBL" id="CP001158">
    <property type="protein sequence ID" value="ACL30283.1"/>
    <property type="molecule type" value="Genomic_DNA"/>
</dbReference>
<dbReference type="RefSeq" id="WP_009874444.1">
    <property type="nucleotide sequence ID" value="NC_011834.1"/>
</dbReference>
<dbReference type="SMR" id="B8D818"/>
<dbReference type="KEGG" id="bau:BUAPTUC7_487"/>
<dbReference type="HOGENOM" id="CLU_044063_2_1_6"/>
<dbReference type="UniPathway" id="UPA00053">
    <property type="reaction ID" value="UER00087"/>
</dbReference>
<dbReference type="GO" id="GO:0005829">
    <property type="term" value="C:cytosol"/>
    <property type="evidence" value="ECO:0007669"/>
    <property type="project" value="TreeGrafter"/>
</dbReference>
<dbReference type="GO" id="GO:0050661">
    <property type="term" value="F:NADP binding"/>
    <property type="evidence" value="ECO:0007669"/>
    <property type="project" value="InterPro"/>
</dbReference>
<dbReference type="GO" id="GO:0004764">
    <property type="term" value="F:shikimate 3-dehydrogenase (NADP+) activity"/>
    <property type="evidence" value="ECO:0007669"/>
    <property type="project" value="UniProtKB-UniRule"/>
</dbReference>
<dbReference type="GO" id="GO:0008652">
    <property type="term" value="P:amino acid biosynthetic process"/>
    <property type="evidence" value="ECO:0007669"/>
    <property type="project" value="UniProtKB-KW"/>
</dbReference>
<dbReference type="GO" id="GO:0009073">
    <property type="term" value="P:aromatic amino acid family biosynthetic process"/>
    <property type="evidence" value="ECO:0007669"/>
    <property type="project" value="UniProtKB-KW"/>
</dbReference>
<dbReference type="GO" id="GO:0009423">
    <property type="term" value="P:chorismate biosynthetic process"/>
    <property type="evidence" value="ECO:0007669"/>
    <property type="project" value="UniProtKB-UniRule"/>
</dbReference>
<dbReference type="GO" id="GO:0019632">
    <property type="term" value="P:shikimate metabolic process"/>
    <property type="evidence" value="ECO:0007669"/>
    <property type="project" value="InterPro"/>
</dbReference>
<dbReference type="CDD" id="cd01065">
    <property type="entry name" value="NAD_bind_Shikimate_DH"/>
    <property type="match status" value="1"/>
</dbReference>
<dbReference type="FunFam" id="3.40.50.10860:FF:000006">
    <property type="entry name" value="Shikimate dehydrogenase (NADP(+))"/>
    <property type="match status" value="1"/>
</dbReference>
<dbReference type="Gene3D" id="3.40.50.10860">
    <property type="entry name" value="Leucine Dehydrogenase, chain A, domain 1"/>
    <property type="match status" value="1"/>
</dbReference>
<dbReference type="Gene3D" id="3.40.50.720">
    <property type="entry name" value="NAD(P)-binding Rossmann-like Domain"/>
    <property type="match status" value="1"/>
</dbReference>
<dbReference type="HAMAP" id="MF_00222">
    <property type="entry name" value="Shikimate_DH_AroE"/>
    <property type="match status" value="1"/>
</dbReference>
<dbReference type="InterPro" id="IPR046346">
    <property type="entry name" value="Aminoacid_DH-like_N_sf"/>
</dbReference>
<dbReference type="InterPro" id="IPR036291">
    <property type="entry name" value="NAD(P)-bd_dom_sf"/>
</dbReference>
<dbReference type="InterPro" id="IPR041121">
    <property type="entry name" value="SDH_C"/>
</dbReference>
<dbReference type="InterPro" id="IPR011342">
    <property type="entry name" value="Shikimate_DH"/>
</dbReference>
<dbReference type="InterPro" id="IPR013708">
    <property type="entry name" value="Shikimate_DH-bd_N"/>
</dbReference>
<dbReference type="InterPro" id="IPR022893">
    <property type="entry name" value="Shikimate_DH_fam"/>
</dbReference>
<dbReference type="InterPro" id="IPR006151">
    <property type="entry name" value="Shikm_DH/Glu-tRNA_Rdtase"/>
</dbReference>
<dbReference type="NCBIfam" id="TIGR00507">
    <property type="entry name" value="aroE"/>
    <property type="match status" value="1"/>
</dbReference>
<dbReference type="NCBIfam" id="NF001310">
    <property type="entry name" value="PRK00258.1-2"/>
    <property type="match status" value="1"/>
</dbReference>
<dbReference type="PANTHER" id="PTHR21089:SF1">
    <property type="entry name" value="BIFUNCTIONAL 3-DEHYDROQUINATE DEHYDRATASE_SHIKIMATE DEHYDROGENASE, CHLOROPLASTIC"/>
    <property type="match status" value="1"/>
</dbReference>
<dbReference type="PANTHER" id="PTHR21089">
    <property type="entry name" value="SHIKIMATE DEHYDROGENASE"/>
    <property type="match status" value="1"/>
</dbReference>
<dbReference type="Pfam" id="PF18317">
    <property type="entry name" value="SDH_C"/>
    <property type="match status" value="1"/>
</dbReference>
<dbReference type="Pfam" id="PF01488">
    <property type="entry name" value="Shikimate_DH"/>
    <property type="match status" value="1"/>
</dbReference>
<dbReference type="Pfam" id="PF08501">
    <property type="entry name" value="Shikimate_dh_N"/>
    <property type="match status" value="1"/>
</dbReference>
<dbReference type="SUPFAM" id="SSF53223">
    <property type="entry name" value="Aminoacid dehydrogenase-like, N-terminal domain"/>
    <property type="match status" value="1"/>
</dbReference>
<dbReference type="SUPFAM" id="SSF51735">
    <property type="entry name" value="NAD(P)-binding Rossmann-fold domains"/>
    <property type="match status" value="1"/>
</dbReference>
<comment type="function">
    <text evidence="1">Involved in the biosynthesis of the chorismate, which leads to the biosynthesis of aromatic amino acids. Catalyzes the reversible NADPH linked reduction of 3-dehydroshikimate (DHSA) to yield shikimate (SA).</text>
</comment>
<comment type="catalytic activity">
    <reaction evidence="1">
        <text>shikimate + NADP(+) = 3-dehydroshikimate + NADPH + H(+)</text>
        <dbReference type="Rhea" id="RHEA:17737"/>
        <dbReference type="ChEBI" id="CHEBI:15378"/>
        <dbReference type="ChEBI" id="CHEBI:16630"/>
        <dbReference type="ChEBI" id="CHEBI:36208"/>
        <dbReference type="ChEBI" id="CHEBI:57783"/>
        <dbReference type="ChEBI" id="CHEBI:58349"/>
        <dbReference type="EC" id="1.1.1.25"/>
    </reaction>
</comment>
<comment type="pathway">
    <text evidence="1">Metabolic intermediate biosynthesis; chorismate biosynthesis; chorismate from D-erythrose 4-phosphate and phosphoenolpyruvate: step 4/7.</text>
</comment>
<comment type="subunit">
    <text evidence="1">Homodimer.</text>
</comment>
<comment type="similarity">
    <text evidence="1">Belongs to the shikimate dehydrogenase family.</text>
</comment>
<accession>B8D818</accession>
<feature type="chain" id="PRO_1000124878" description="Shikimate dehydrogenase (NADP(+))">
    <location>
        <begin position="1"/>
        <end position="273"/>
    </location>
</feature>
<feature type="active site" description="Proton acceptor" evidence="1">
    <location>
        <position position="70"/>
    </location>
</feature>
<feature type="binding site" evidence="1">
    <location>
        <begin position="19"/>
        <end position="21"/>
    </location>
    <ligand>
        <name>shikimate</name>
        <dbReference type="ChEBI" id="CHEBI:36208"/>
    </ligand>
</feature>
<feature type="binding site" evidence="1">
    <location>
        <position position="66"/>
    </location>
    <ligand>
        <name>shikimate</name>
        <dbReference type="ChEBI" id="CHEBI:36208"/>
    </ligand>
</feature>
<feature type="binding site" evidence="1">
    <location>
        <position position="91"/>
    </location>
    <ligand>
        <name>shikimate</name>
        <dbReference type="ChEBI" id="CHEBI:36208"/>
    </ligand>
</feature>
<feature type="binding site" evidence="1">
    <location>
        <position position="107"/>
    </location>
    <ligand>
        <name>shikimate</name>
        <dbReference type="ChEBI" id="CHEBI:36208"/>
    </ligand>
</feature>
<feature type="binding site" evidence="1">
    <location>
        <begin position="131"/>
        <end position="135"/>
    </location>
    <ligand>
        <name>NADP(+)</name>
        <dbReference type="ChEBI" id="CHEBI:58349"/>
    </ligand>
</feature>
<feature type="binding site" evidence="1">
    <location>
        <position position="218"/>
    </location>
    <ligand>
        <name>NADP(+)</name>
        <dbReference type="ChEBI" id="CHEBI:58349"/>
    </ligand>
</feature>
<feature type="binding site" evidence="1">
    <location>
        <position position="220"/>
    </location>
    <ligand>
        <name>shikimate</name>
        <dbReference type="ChEBI" id="CHEBI:36208"/>
    </ligand>
</feature>
<feature type="binding site" evidence="1">
    <location>
        <position position="242"/>
    </location>
    <ligand>
        <name>NADP(+)</name>
        <dbReference type="ChEBI" id="CHEBI:58349"/>
    </ligand>
</feature>
<evidence type="ECO:0000255" key="1">
    <source>
        <dbReference type="HAMAP-Rule" id="MF_00222"/>
    </source>
</evidence>
<keyword id="KW-0028">Amino-acid biosynthesis</keyword>
<keyword id="KW-0057">Aromatic amino acid biosynthesis</keyword>
<keyword id="KW-0521">NADP</keyword>
<keyword id="KW-0560">Oxidoreductase</keyword>
<proteinExistence type="inferred from homology"/>
<protein>
    <recommendedName>
        <fullName evidence="1">Shikimate dehydrogenase (NADP(+))</fullName>
        <shortName evidence="1">SDH</shortName>
        <ecNumber evidence="1">1.1.1.25</ecNumber>
    </recommendedName>
</protein>
<sequence>MFKCKNFNYAVFGNPINHSKSPEIHSLFSKQTGISHFYKSCNVPLNSLYAVLQDFFKKDGRGANITAPFKQEAYFFCNKLTKRAEVAQSVNTLKKIDNCNILGDNTDGIGLLSDLIRLNFIKKNYSILIIGAGGAARGVLFPLLSYGCSICIFNRTVLNAEKLVLQFHKYGNINVFNTNSLHVKSFDLIINATSHFIQDKDNFIPFSCVSSKTCFYDMNYQTDNTFFFDWSRKTGSNFFSNGIGMLVFQAAHSFFLWHNVLPEIDYIIDLLNK</sequence>
<name>AROE_BUCAT</name>